<keyword id="KW-0002">3D-structure</keyword>
<keyword id="KW-0167">Capsid protein</keyword>
<keyword id="KW-1139">Helical capsid protein</keyword>
<keyword id="KW-1035">Host cytoplasm</keyword>
<keyword id="KW-1185">Reference proteome</keyword>
<keyword id="KW-0687">Ribonucleoprotein</keyword>
<keyword id="KW-0694">RNA-binding</keyword>
<keyword id="KW-0543">Viral nucleoprotein</keyword>
<keyword id="KW-0693">Viral RNA replication</keyword>
<keyword id="KW-0946">Virion</keyword>
<protein>
    <recommendedName>
        <fullName>Nucleoprotein</fullName>
        <shortName>NP</shortName>
    </recommendedName>
    <alternativeName>
        <fullName>Nucleocapsid protein</fullName>
        <shortName>Protein N</shortName>
    </alternativeName>
</protein>
<comment type="function">
    <text evidence="2 4 5 7 9 10 12 13 14">Encapsidates the genome in a ratio of one N per nine ribonucleotides, protecting it from nucleases (PubMed:16778022, PubMed:20133572, PubMed:29437970, PubMed:35970826, PubMed:36216930). The encapsidated genomic RNA is termed the NC and serves as template for transcription and replication (PubMed:21177817). The nucleocapsid is bullet-shaped with the tip containing 8 turns of a conical spiral before reaching the helical cylindrical trunk (PubMed:35476516). Nucleocapsid assembly is concomitant with replication, therefore viral replication depends on the intracellular concentration of free N, termed N(0). All replicative products are resistant to nucleases.</text>
</comment>
<comment type="subunit">
    <text evidence="1 4 5 6 8 9 11 12 13 14">Homomultimerizes to form the nucleocapsid (PubMed:20133572, PubMed:21177817, PubMed:35970826, PubMed:36216930). Binds to viral genomic RNA; this interaction contributes to the virion assembly (PubMed:11000221, PubMed:20133572, PubMed:21177817, PubMed:28396572, PubMed:29437970, PubMed:3016338, PubMed:35970826, PubMed:36216930). N in the nucleocapsid interacts (via C-terminus) with the P protein (via C-terminus); this interaction allows to package the L polymerase in the virion and positions the polymerase on the template, since P acts as a bridge between N and L (PubMed:28396572, PubMed:3016338, PubMed:35476516, PubMed:35970826). N(0) interacts with the P protein; this interaction prevents the uncontrolled aggregation of N(0) (PubMed:21207454). Interacts with the matrix protein (inner layer); this interaction contributes to the virion assembly (PubMed:35970826, PubMed:36216930). Interacts with the L polymerase (PubMed:35476516).</text>
</comment>
<comment type="subcellular location">
    <subcellularLocation>
        <location evidence="3 4 5 12 13 14">Virion</location>
    </subcellularLocation>
    <subcellularLocation>
        <location>Host cytoplasm</location>
    </subcellularLocation>
    <text evidence="12">The nucleocapsid is synthesized in the cytoplasm, and is subsequently transported via microtubules to the cell periphery. About 1240 copies of N are present in the virion (PubMed:35476516).</text>
</comment>
<comment type="similarity">
    <text evidence="15">Belongs to the vesiculovirus nucleocapsid protein family.</text>
</comment>
<proteinExistence type="evidence at protein level"/>
<organismHost>
    <name type="scientific">Aedes</name>
    <dbReference type="NCBI Taxonomy" id="7158"/>
</organismHost>
<organismHost>
    <name type="scientific">Bos taurus</name>
    <name type="common">Bovine</name>
    <dbReference type="NCBI Taxonomy" id="9913"/>
</organismHost>
<organismHost>
    <name type="scientific">Culicoides</name>
    <dbReference type="NCBI Taxonomy" id="58271"/>
</organismHost>
<organismHost>
    <name type="scientific">Equus asinus</name>
    <name type="common">Donkey</name>
    <name type="synonym">Equus africanus asinus</name>
    <dbReference type="NCBI Taxonomy" id="9793"/>
</organismHost>
<organismHost>
    <name type="scientific">Equus caballus</name>
    <name type="common">Horse</name>
    <dbReference type="NCBI Taxonomy" id="9796"/>
</organismHost>
<organismHost>
    <name type="scientific">Homo sapiens</name>
    <name type="common">Human</name>
    <dbReference type="NCBI Taxonomy" id="9606"/>
</organismHost>
<organismHost>
    <name type="scientific">Lutzomyia</name>
    <dbReference type="NCBI Taxonomy" id="252607"/>
</organismHost>
<organismHost>
    <name type="scientific">Musca domestica</name>
    <name type="common">House fly</name>
    <dbReference type="NCBI Taxonomy" id="7370"/>
</organismHost>
<organismHost>
    <name type="scientific">Simuliidae</name>
    <name type="common">black flies</name>
    <dbReference type="NCBI Taxonomy" id="7190"/>
</organismHost>
<organismHost>
    <name type="scientific">Sus scrofa</name>
    <name type="common">Pig</name>
    <dbReference type="NCBI Taxonomy" id="9823"/>
</organismHost>
<evidence type="ECO:0000269" key="1">
    <source>
    </source>
</evidence>
<evidence type="ECO:0000269" key="2">
    <source>
    </source>
</evidence>
<evidence type="ECO:0000269" key="3">
    <source>
    </source>
</evidence>
<evidence type="ECO:0000269" key="4">
    <source>
    </source>
</evidence>
<evidence type="ECO:0000269" key="5">
    <source>
    </source>
</evidence>
<evidence type="ECO:0000269" key="6">
    <source>
    </source>
</evidence>
<evidence type="ECO:0000269" key="7">
    <source>
    </source>
</evidence>
<evidence type="ECO:0000269" key="8">
    <source>
    </source>
</evidence>
<evidence type="ECO:0000269" key="9">
    <source>
    </source>
</evidence>
<evidence type="ECO:0000269" key="10">
    <source>
    </source>
</evidence>
<evidence type="ECO:0000269" key="11">
    <source>
    </source>
</evidence>
<evidence type="ECO:0000269" key="12">
    <source>
    </source>
</evidence>
<evidence type="ECO:0000269" key="13">
    <source>
    </source>
</evidence>
<evidence type="ECO:0000269" key="14">
    <source>
    </source>
</evidence>
<evidence type="ECO:0000305" key="15"/>
<evidence type="ECO:0007744" key="16">
    <source>
        <dbReference type="PDB" id="2GIC"/>
    </source>
</evidence>
<evidence type="ECO:0007744" key="17">
    <source>
        <dbReference type="PDB" id="2WYY"/>
    </source>
</evidence>
<evidence type="ECO:0007744" key="18">
    <source>
        <dbReference type="PDB" id="3PTO"/>
    </source>
</evidence>
<evidence type="ECO:0007744" key="19">
    <source>
        <dbReference type="PDB" id="3PTX"/>
    </source>
</evidence>
<evidence type="ECO:0007744" key="20">
    <source>
        <dbReference type="PDB" id="3PU0"/>
    </source>
</evidence>
<evidence type="ECO:0007744" key="21">
    <source>
        <dbReference type="PDB" id="3PU1"/>
    </source>
</evidence>
<evidence type="ECO:0007744" key="22">
    <source>
        <dbReference type="PDB" id="3PU4"/>
    </source>
</evidence>
<evidence type="ECO:0007744" key="23">
    <source>
        <dbReference type="PDB" id="5UK4"/>
    </source>
</evidence>
<evidence type="ECO:0007744" key="24">
    <source>
        <dbReference type="PDB" id="6BJY"/>
    </source>
</evidence>
<evidence type="ECO:0007744" key="25">
    <source>
        <dbReference type="PDB" id="7UMK"/>
    </source>
</evidence>
<evidence type="ECO:0007744" key="26">
    <source>
        <dbReference type="PDB" id="7UML"/>
    </source>
</evidence>
<evidence type="ECO:0007744" key="27">
    <source>
        <dbReference type="PDB" id="7UWS"/>
    </source>
</evidence>
<evidence type="ECO:0007829" key="28">
    <source>
        <dbReference type="PDB" id="2GIC"/>
    </source>
</evidence>
<evidence type="ECO:0007829" key="29">
    <source>
        <dbReference type="PDB" id="3PTX"/>
    </source>
</evidence>
<evidence type="ECO:0007829" key="30">
    <source>
        <dbReference type="PDB" id="3PU0"/>
    </source>
</evidence>
<evidence type="ECO:0007829" key="31">
    <source>
        <dbReference type="PDB" id="3PU1"/>
    </source>
</evidence>
<evidence type="ECO:0007829" key="32">
    <source>
        <dbReference type="PDB" id="5UK4"/>
    </source>
</evidence>
<evidence type="ECO:0007829" key="33">
    <source>
        <dbReference type="PDB" id="7UML"/>
    </source>
</evidence>
<evidence type="ECO:0007829" key="34">
    <source>
        <dbReference type="PDB" id="7UWS"/>
    </source>
</evidence>
<feature type="chain" id="PRO_0000222823" description="Nucleoprotein">
    <location>
        <begin position="1"/>
        <end position="422"/>
    </location>
</feature>
<feature type="region of interest" description="Interaction with the phosphoprotein" evidence="8">
    <location>
        <begin position="350"/>
        <end position="390"/>
    </location>
</feature>
<feature type="binding site" evidence="13">
    <location>
        <position position="143"/>
    </location>
    <ligand>
        <name>RNA</name>
        <dbReference type="ChEBI" id="CHEBI:33697"/>
    </ligand>
</feature>
<feature type="binding site" evidence="13">
    <location>
        <position position="152"/>
    </location>
    <ligand>
        <name>RNA</name>
        <dbReference type="ChEBI" id="CHEBI:33697"/>
    </ligand>
</feature>
<feature type="binding site" evidence="13">
    <location>
        <position position="206"/>
    </location>
    <ligand>
        <name>RNA</name>
        <dbReference type="ChEBI" id="CHEBI:33697"/>
    </ligand>
</feature>
<feature type="binding site" evidence="13">
    <location>
        <position position="214"/>
    </location>
    <ligand>
        <name>RNA</name>
        <dbReference type="ChEBI" id="CHEBI:33697"/>
    </ligand>
</feature>
<feature type="binding site" evidence="13">
    <location>
        <position position="286"/>
    </location>
    <ligand>
        <name>RNA</name>
        <dbReference type="ChEBI" id="CHEBI:33697"/>
    </ligand>
</feature>
<feature type="binding site" evidence="13">
    <location>
        <position position="317"/>
    </location>
    <ligand>
        <name>RNA</name>
        <dbReference type="ChEBI" id="CHEBI:33697"/>
    </ligand>
</feature>
<feature type="binding site" evidence="13">
    <location>
        <position position="408"/>
    </location>
    <ligand>
        <name>RNA</name>
        <dbReference type="ChEBI" id="CHEBI:33697"/>
    </ligand>
</feature>
<feature type="strand" evidence="28">
    <location>
        <begin position="5"/>
        <end position="7"/>
    </location>
</feature>
<feature type="turn" evidence="28">
    <location>
        <begin position="8"/>
        <end position="11"/>
    </location>
</feature>
<feature type="strand" evidence="28">
    <location>
        <begin position="12"/>
        <end position="14"/>
    </location>
</feature>
<feature type="helix" evidence="28">
    <location>
        <begin position="29"/>
        <end position="31"/>
    </location>
</feature>
<feature type="turn" evidence="28">
    <location>
        <begin position="32"/>
        <end position="34"/>
    </location>
</feature>
<feature type="strand" evidence="32">
    <location>
        <begin position="39"/>
        <end position="42"/>
    </location>
</feature>
<feature type="helix" evidence="28">
    <location>
        <begin position="48"/>
        <end position="59"/>
    </location>
</feature>
<feature type="turn" evidence="28">
    <location>
        <begin position="60"/>
        <end position="62"/>
    </location>
</feature>
<feature type="helix" evidence="28">
    <location>
        <begin position="66"/>
        <end position="76"/>
    </location>
</feature>
<feature type="strand" evidence="28">
    <location>
        <begin position="88"/>
        <end position="90"/>
    </location>
</feature>
<feature type="strand" evidence="28">
    <location>
        <begin position="93"/>
        <end position="96"/>
    </location>
</feature>
<feature type="strand" evidence="34">
    <location>
        <begin position="98"/>
        <end position="101"/>
    </location>
</feature>
<feature type="strand" evidence="32">
    <location>
        <begin position="106"/>
        <end position="112"/>
    </location>
</feature>
<feature type="turn" evidence="28">
    <location>
        <begin position="130"/>
        <end position="133"/>
    </location>
</feature>
<feature type="helix" evidence="28">
    <location>
        <begin position="134"/>
        <end position="144"/>
    </location>
</feature>
<feature type="helix" evidence="28">
    <location>
        <begin position="151"/>
        <end position="163"/>
    </location>
</feature>
<feature type="turn" evidence="28">
    <location>
        <begin position="164"/>
        <end position="167"/>
    </location>
</feature>
<feature type="strand" evidence="28">
    <location>
        <begin position="178"/>
        <end position="182"/>
    </location>
</feature>
<feature type="helix" evidence="28">
    <location>
        <begin position="185"/>
        <end position="187"/>
    </location>
</feature>
<feature type="helix" evidence="28">
    <location>
        <begin position="189"/>
        <end position="204"/>
    </location>
</feature>
<feature type="turn" evidence="30">
    <location>
        <begin position="205"/>
        <end position="207"/>
    </location>
</feature>
<feature type="helix" evidence="28">
    <location>
        <begin position="211"/>
        <end position="213"/>
    </location>
</feature>
<feature type="helix" evidence="28">
    <location>
        <begin position="214"/>
        <end position="217"/>
    </location>
</feature>
<feature type="helix" evidence="28">
    <location>
        <begin position="218"/>
        <end position="220"/>
    </location>
</feature>
<feature type="turn" evidence="28">
    <location>
        <begin position="221"/>
        <end position="224"/>
    </location>
</feature>
<feature type="helix" evidence="28">
    <location>
        <begin position="226"/>
        <end position="238"/>
    </location>
</feature>
<feature type="helix" evidence="28">
    <location>
        <begin position="242"/>
        <end position="247"/>
    </location>
</feature>
<feature type="helix" evidence="28">
    <location>
        <begin position="252"/>
        <end position="261"/>
    </location>
</feature>
<feature type="strand" evidence="28">
    <location>
        <begin position="264"/>
        <end position="266"/>
    </location>
</feature>
<feature type="strand" evidence="31">
    <location>
        <begin position="270"/>
        <end position="272"/>
    </location>
</feature>
<feature type="helix" evidence="28">
    <location>
        <begin position="275"/>
        <end position="277"/>
    </location>
</feature>
<feature type="turn" evidence="28">
    <location>
        <begin position="278"/>
        <end position="282"/>
    </location>
</feature>
<feature type="strand" evidence="32">
    <location>
        <begin position="288"/>
        <end position="290"/>
    </location>
</feature>
<feature type="turn" evidence="29">
    <location>
        <begin position="291"/>
        <end position="293"/>
    </location>
</feature>
<feature type="helix" evidence="28">
    <location>
        <begin position="295"/>
        <end position="307"/>
    </location>
</feature>
<feature type="helix" evidence="28">
    <location>
        <begin position="313"/>
        <end position="315"/>
    </location>
</feature>
<feature type="strand" evidence="28">
    <location>
        <begin position="320"/>
        <end position="322"/>
    </location>
</feature>
<feature type="helix" evidence="28">
    <location>
        <begin position="324"/>
        <end position="340"/>
    </location>
</feature>
<feature type="strand" evidence="32">
    <location>
        <begin position="348"/>
        <end position="352"/>
    </location>
</feature>
<feature type="turn" evidence="34">
    <location>
        <begin position="359"/>
        <end position="361"/>
    </location>
</feature>
<feature type="turn" evidence="29">
    <location>
        <begin position="365"/>
        <end position="367"/>
    </location>
</feature>
<feature type="helix" evidence="28">
    <location>
        <begin position="375"/>
        <end position="383"/>
    </location>
</feature>
<feature type="turn" evidence="28">
    <location>
        <begin position="384"/>
        <end position="387"/>
    </location>
</feature>
<feature type="helix" evidence="28">
    <location>
        <begin position="391"/>
        <end position="401"/>
    </location>
</feature>
<feature type="strand" evidence="33">
    <location>
        <begin position="409"/>
        <end position="411"/>
    </location>
</feature>
<feature type="helix" evidence="28">
    <location>
        <begin position="412"/>
        <end position="420"/>
    </location>
</feature>
<sequence length="422" mass="47409">MSVTVKRIIDNTVIVPKLPANEDPVEYPADYFRKSKEIPLYINTTKSLSDLRGYVYQGLKSGNVSIIHVNSYLYGALKDIRGKLDKDWSSFGINIGKAGDTIGIFDLVSLKALDGVLPDGVSDASRTSADDKWLPLYLLGLYRVGRTQMPEYRKKLMDGLTNQCKMINEQFEPLVPEGRDIFDVWGNDSNYTKIVAAVDMFFHMFKKHECASFRYGTIVSRFKDCAALATFGHLCKITGMSTEDVTTWILNREVADEMVQMMLPGQEIDKADSYMPYLIDFGLSSKSPYSSVKNPAFHFWGQLTALLLRSTRARNARQPDDIEYTSLTTAGLLYAYAVGSSADLAQQFCVGDNKYTPDDSTGGLTTNAPPQGRDVVEWLGWFEDQNRKPTPDMMQYAKRAVMSLQGLREKTIGKYAKSEFDK</sequence>
<accession>P03521</accession>
<name>NCAP_VSIVA</name>
<organism>
    <name type="scientific">Vesicular stomatitis Indiana virus (strain San Juan)</name>
    <name type="common">VSIV</name>
    <dbReference type="NCBI Taxonomy" id="11285"/>
    <lineage>
        <taxon>Viruses</taxon>
        <taxon>Riboviria</taxon>
        <taxon>Orthornavirae</taxon>
        <taxon>Negarnaviricota</taxon>
        <taxon>Haploviricotina</taxon>
        <taxon>Monjiviricetes</taxon>
        <taxon>Mononegavirales</taxon>
        <taxon>Rhabdoviridae</taxon>
        <taxon>Alpharhabdovirinae</taxon>
        <taxon>Vesiculovirus</taxon>
        <taxon>Vesiculovirus indiana</taxon>
    </lineage>
</organism>
<gene>
    <name type="primary">N</name>
</gene>
<dbReference type="EMBL" id="J02428">
    <property type="protein sequence ID" value="AAA48367.1"/>
    <property type="molecule type" value="Genomic_RNA"/>
</dbReference>
<dbReference type="RefSeq" id="NP_041712.1">
    <property type="nucleotide sequence ID" value="NC_001560.1"/>
</dbReference>
<dbReference type="PDB" id="1FZJ">
    <property type="method" value="X-ray"/>
    <property type="resolution" value="1.90 A"/>
    <property type="chains" value="P=52-59"/>
</dbReference>
<dbReference type="PDB" id="1FZM">
    <property type="method" value="X-ray"/>
    <property type="resolution" value="1.80 A"/>
    <property type="chains" value="P=52-59"/>
</dbReference>
<dbReference type="PDB" id="2GIC">
    <property type="method" value="X-ray"/>
    <property type="resolution" value="2.92 A"/>
    <property type="chains" value="A/B/C/D/E=1-422"/>
</dbReference>
<dbReference type="PDB" id="2QVJ">
    <property type="method" value="X-ray"/>
    <property type="resolution" value="2.80 A"/>
    <property type="chains" value="A/B/C/D/E=2-422"/>
</dbReference>
<dbReference type="PDB" id="2WYY">
    <property type="method" value="EM"/>
    <property type="resolution" value="10.00 A"/>
    <property type="chains" value="A/C/D/F/H/I/J/K/L/M=1-422"/>
</dbReference>
<dbReference type="PDB" id="3PTO">
    <property type="method" value="X-ray"/>
    <property type="resolution" value="3.01 A"/>
    <property type="chains" value="A/B/C/D/E=2-422"/>
</dbReference>
<dbReference type="PDB" id="3PTX">
    <property type="method" value="X-ray"/>
    <property type="resolution" value="3.00 A"/>
    <property type="chains" value="A/B/C/D/E=2-422"/>
</dbReference>
<dbReference type="PDB" id="3PU0">
    <property type="method" value="X-ray"/>
    <property type="resolution" value="3.09 A"/>
    <property type="chains" value="A/B/C/D/E=2-422"/>
</dbReference>
<dbReference type="PDB" id="3PU1">
    <property type="method" value="X-ray"/>
    <property type="resolution" value="3.14 A"/>
    <property type="chains" value="A/B/C/D/E=2-422"/>
</dbReference>
<dbReference type="PDB" id="3PU4">
    <property type="method" value="X-ray"/>
    <property type="resolution" value="3.00 A"/>
    <property type="chains" value="A/B/C/D/E=2-422"/>
</dbReference>
<dbReference type="PDB" id="5UK4">
    <property type="method" value="X-ray"/>
    <property type="resolution" value="3.20 A"/>
    <property type="chains" value="A/B/C/D/E/F/G/H/I/J/K/L/M/N/O/P/Q/R/S/T=1-422"/>
</dbReference>
<dbReference type="PDB" id="6BJY">
    <property type="method" value="X-ray"/>
    <property type="resolution" value="3.46 A"/>
    <property type="chains" value="A/B/C/D/E=2-422"/>
</dbReference>
<dbReference type="PDB" id="6WL2">
    <property type="method" value="X-ray"/>
    <property type="resolution" value="3.30 A"/>
    <property type="chains" value="B/E/H=52-59"/>
</dbReference>
<dbReference type="PDB" id="6WL3">
    <property type="method" value="X-ray"/>
    <property type="resolution" value="3.45 A"/>
    <property type="chains" value="B/E/H=52-59"/>
</dbReference>
<dbReference type="PDB" id="6WL4">
    <property type="method" value="X-ray"/>
    <property type="resolution" value="3.60 A"/>
    <property type="chains" value="B/E/H=52-59"/>
</dbReference>
<dbReference type="PDB" id="7UMK">
    <property type="method" value="EM"/>
    <property type="resolution" value="4.10 A"/>
    <property type="chains" value="A=1-422"/>
</dbReference>
<dbReference type="PDB" id="7UML">
    <property type="method" value="EM"/>
    <property type="resolution" value="3.50 A"/>
    <property type="chains" value="A/D/E=1-422"/>
</dbReference>
<dbReference type="PDB" id="7UWS">
    <property type="method" value="EM"/>
    <property type="resolution" value="3.47 A"/>
    <property type="chains" value="A/B/C/D/E/F/G=1-422"/>
</dbReference>
<dbReference type="PDBsum" id="1FZJ"/>
<dbReference type="PDBsum" id="1FZM"/>
<dbReference type="PDBsum" id="2GIC"/>
<dbReference type="PDBsum" id="2QVJ"/>
<dbReference type="PDBsum" id="2WYY"/>
<dbReference type="PDBsum" id="3PTO"/>
<dbReference type="PDBsum" id="3PTX"/>
<dbReference type="PDBsum" id="3PU0"/>
<dbReference type="PDBsum" id="3PU1"/>
<dbReference type="PDBsum" id="3PU4"/>
<dbReference type="PDBsum" id="5UK4"/>
<dbReference type="PDBsum" id="6BJY"/>
<dbReference type="PDBsum" id="6WL2"/>
<dbReference type="PDBsum" id="6WL3"/>
<dbReference type="PDBsum" id="6WL4"/>
<dbReference type="PDBsum" id="7UMK"/>
<dbReference type="PDBsum" id="7UML"/>
<dbReference type="PDBsum" id="7UWS"/>
<dbReference type="EMDB" id="EMD-26602"/>
<dbReference type="EMDB" id="EMD-26603"/>
<dbReference type="EMDB" id="EMD-26841"/>
<dbReference type="SMR" id="P03521"/>
<dbReference type="ABCD" id="P03521">
    <property type="antibodies" value="4 sequenced antibodies"/>
</dbReference>
<dbReference type="DNASU" id="1489831"/>
<dbReference type="KEGG" id="vg:1489831"/>
<dbReference type="CD-CODE" id="01BEC43A">
    <property type="entry name" value="Synthetic Condensate 000315"/>
</dbReference>
<dbReference type="CD-CODE" id="0E37FC39">
    <property type="entry name" value="Cytoplasmic viral factory"/>
</dbReference>
<dbReference type="EvolutionaryTrace" id="P03521"/>
<dbReference type="Proteomes" id="UP000002327">
    <property type="component" value="Segment"/>
</dbReference>
<dbReference type="GO" id="GO:0019029">
    <property type="term" value="C:helical viral capsid"/>
    <property type="evidence" value="ECO:0007669"/>
    <property type="project" value="UniProtKB-KW"/>
</dbReference>
<dbReference type="GO" id="GO:0030430">
    <property type="term" value="C:host cell cytoplasm"/>
    <property type="evidence" value="ECO:0007669"/>
    <property type="project" value="UniProtKB-SubCell"/>
</dbReference>
<dbReference type="GO" id="GO:1990904">
    <property type="term" value="C:ribonucleoprotein complex"/>
    <property type="evidence" value="ECO:0007669"/>
    <property type="project" value="UniProtKB-KW"/>
</dbReference>
<dbReference type="GO" id="GO:0019013">
    <property type="term" value="C:viral nucleocapsid"/>
    <property type="evidence" value="ECO:0000314"/>
    <property type="project" value="UniProtKB"/>
</dbReference>
<dbReference type="GO" id="GO:0003723">
    <property type="term" value="F:RNA binding"/>
    <property type="evidence" value="ECO:0000314"/>
    <property type="project" value="UniProtKB"/>
</dbReference>
<dbReference type="GO" id="GO:0039703">
    <property type="term" value="P:RNA replication"/>
    <property type="evidence" value="ECO:0000314"/>
    <property type="project" value="UniProtKB"/>
</dbReference>
<dbReference type="GO" id="GO:0019083">
    <property type="term" value="P:viral transcription"/>
    <property type="evidence" value="ECO:0000314"/>
    <property type="project" value="UniProtKB"/>
</dbReference>
<dbReference type="FunFam" id="1.10.3570.10:FF:000001">
    <property type="entry name" value="Nucleoprotein"/>
    <property type="match status" value="1"/>
</dbReference>
<dbReference type="FunFam" id="1.10.3610.10:FF:000001">
    <property type="entry name" value="Nucleoprotein"/>
    <property type="match status" value="1"/>
</dbReference>
<dbReference type="Gene3D" id="1.10.3610.10">
    <property type="entry name" value="Nucleoprotein"/>
    <property type="match status" value="1"/>
</dbReference>
<dbReference type="Gene3D" id="1.10.3570.10">
    <property type="entry name" value="Rhabdovirus nucleocapsid protein like domain"/>
    <property type="match status" value="1"/>
</dbReference>
<dbReference type="InterPro" id="IPR000448">
    <property type="entry name" value="Rhabdo_ncapsid"/>
</dbReference>
<dbReference type="InterPro" id="IPR023331">
    <property type="entry name" value="Rhabdovirus_ncapsid_C"/>
</dbReference>
<dbReference type="InterPro" id="IPR023330">
    <property type="entry name" value="Rhabdovirus_ncapsid_N"/>
</dbReference>
<dbReference type="InterPro" id="IPR035961">
    <property type="entry name" value="Rhabdovirus_nucleoprotein-like"/>
</dbReference>
<dbReference type="Pfam" id="PF00945">
    <property type="entry name" value="Rhabdo_ncap"/>
    <property type="match status" value="1"/>
</dbReference>
<dbReference type="SUPFAM" id="SSF140809">
    <property type="entry name" value="Rhabdovirus nucleoprotein-like"/>
    <property type="match status" value="1"/>
</dbReference>
<reference key="1">
    <citation type="journal article" date="1981" name="J. Virol.">
        <title>Nucleotide sequences of the mRNA's encoding the vesicular stomatitis virus N and NS proteins.</title>
        <authorList>
            <person name="Gallione C.J."/>
            <person name="Greene J.R."/>
            <person name="Iverson L.E."/>
            <person name="Rose J.K."/>
        </authorList>
    </citation>
    <scope>NUCLEOTIDE SEQUENCE [GENOMIC RNA]</scope>
</reference>
<reference key="2">
    <citation type="journal article" date="1985" name="Cell">
        <title>Role of the nucleocapsid protein in regulating vesicular stomatitis virus RNA synthesis.</title>
        <authorList>
            <person name="Arnheiter H."/>
            <person name="Davis N.L."/>
            <person name="Wertz G."/>
            <person name="Schubert M."/>
            <person name="Lazzarini R.A."/>
        </authorList>
    </citation>
    <scope>FUNCTION</scope>
    <source>
        <strain>Mudd-Summers</strain>
    </source>
</reference>
<reference key="3">
    <citation type="journal article" date="1991" name="J. Virol.">
        <title>Intracellular distribution of input vesicular stomatitis virus proteins after uncoating.</title>
        <authorList>
            <person name="Rigaut K.D."/>
            <person name="Birk D.E."/>
            <person name="Lenard J."/>
        </authorList>
    </citation>
    <scope>SUBCELLULAR LOCATION</scope>
</reference>
<reference key="4">
    <citation type="journal article" date="1986" name="J. Virol.">
        <title>Vesicular stomatitis virus N and NS proteins form multiple complexes.</title>
        <authorList>
            <person name="Davis N.L."/>
            <person name="Arnheiter H."/>
            <person name="Wertz G.W."/>
        </authorList>
    </citation>
    <scope>INTERACTION WITH PHOSPHOPROTEIN</scope>
</reference>
<reference key="5">
    <citation type="journal article" date="2000" name="J. Virol.">
        <title>Study of the assembly of vesicular stomatitis virus N protein: role of the P protein.</title>
        <authorList>
            <person name="Green T.J."/>
            <person name="Macpherson S."/>
            <person name="Qiu S."/>
            <person name="Lebowitz J."/>
            <person name="Wertz G.W."/>
            <person name="Luo M."/>
        </authorList>
    </citation>
    <scope>RNA-BINDING</scope>
    <scope>INTERACTION WITH PHOSPHOPROTEIN</scope>
</reference>
<reference key="6">
    <citation type="journal article" date="2011" name="Protein Sci.">
        <title>The N(0)-binding region of the vesicular stomatitis virus phosphoprotein is globally disordered but contains transient alpha-helices.</title>
        <authorList>
            <person name="Leyrat C."/>
            <person name="Jensen M.R."/>
            <person name="Ribeiro E.A. Jr."/>
            <person name="Gerard F.C."/>
            <person name="Ruigrok R.W."/>
            <person name="Blackledge M."/>
            <person name="Jamin M."/>
        </authorList>
    </citation>
    <scope>INTERACTION WITH PHOSPHOPROTEIN</scope>
</reference>
<reference key="7">
    <citation type="journal article" date="2012" name="J. Virol.">
        <title>Second-site mutations selected in transcriptional regulatory sequences compensate for engineered mutations in the vesicular stomatitis virus nucleocapsid protein.</title>
        <authorList>
            <person name="Harouaka D."/>
            <person name="Wertz G.W."/>
        </authorList>
    </citation>
    <scope>FUNCTION</scope>
</reference>
<reference evidence="16" key="8">
    <citation type="journal article" date="2006" name="Science">
        <title>Structure of the vesicular stomatitis virus nucleoprotein-RNA complex.</title>
        <authorList>
            <person name="Green T.J."/>
            <person name="Zhang X."/>
            <person name="Wertz G.W."/>
            <person name="Luo M."/>
        </authorList>
    </citation>
    <scope>X-RAY CRYSTALLOGRAPHY (2.92 ANGSTROMS)</scope>
    <scope>FUNCTION</scope>
</reference>
<reference evidence="17" key="9">
    <citation type="journal article" date="2010" name="Science">
        <title>Cryo-EM model of the bullet-shaped vesicular stomatitis virus.</title>
        <authorList>
            <person name="Ge P."/>
            <person name="Tsao J."/>
            <person name="Schein S."/>
            <person name="Green T.J."/>
            <person name="Luo M."/>
            <person name="Zhou Z.H."/>
        </authorList>
    </citation>
    <scope>STRUCTURE BY ELECTRON MICROSCOPY (10.60 ANGSTROMS)</scope>
    <scope>RNA-BINDING</scope>
    <scope>SUBCELLULAR LOCATION</scope>
    <scope>FUNCTION</scope>
    <scope>SUBUNIT</scope>
</reference>
<reference evidence="18 19 20 21 22" key="10">
    <citation type="journal article" date="2011" name="J. Virol.">
        <title>Access to RNA encapsidated in the nucleocapsid of vesicular stomatitis virus.</title>
        <authorList>
            <person name="Green T.J."/>
            <person name="Rowse M."/>
            <person name="Tsao J."/>
            <person name="Kang J."/>
            <person name="Ge P."/>
            <person name="Zhou Z.H."/>
            <person name="Luo M."/>
        </authorList>
    </citation>
    <scope>X-RAY CRYSTALLOGRAPHY (3.00 ANGSTROMS) OF 2-422</scope>
    <scope>RNA-BINDING</scope>
    <scope>FUNCTION</scope>
    <scope>SUBUNIT</scope>
    <scope>SUBCELLULAR LOCATION</scope>
</reference>
<reference evidence="23" key="11">
    <citation type="journal article" date="2017" name="EMBO Rep.">
        <title>Vesicular stomatitis virus N protein-specific single-domain antibody fragments inhibit replication.</title>
        <authorList>
            <person name="Hanke L."/>
            <person name="Schmidt F.I."/>
            <person name="Knockenhauer K.E."/>
            <person name="Morin B."/>
            <person name="Whelan S.P."/>
            <person name="Schwartz T.U."/>
            <person name="Ploegh H.L."/>
        </authorList>
    </citation>
    <scope>X-RAY CRYSTALLOGRAPHY (3.20 ANGSTROMS) IN COMPLEX WITH INHIBITORY NANOBODY 1307</scope>
    <scope>INTERACTION WITH THE PHOSPHOPROTEIN</scope>
</reference>
<reference evidence="24" key="12">
    <citation type="journal article" date="2018" name="J. Virol.">
        <title>A Polyamide Inhibits Replication of Vesicular Stomatitis Virus by Targeting RNA in the Nucleocapsid.</title>
        <authorList>
            <person name="Gumpper R.H."/>
            <person name="Li W."/>
            <person name="Castaneda C.H."/>
            <person name="Scuderi M.J."/>
            <person name="Bashkin J.K."/>
            <person name="Luo M."/>
        </authorList>
    </citation>
    <scope>X-RAY CRYSTALLOGRAPHY (3.46 ANGSTROMS) OF 2-422 IN COMPLEX WITH POLYAMIDE</scope>
    <scope>FUNCTION</scope>
    <scope>RNA-BINDING</scope>
</reference>
<reference evidence="25 26" key="13">
    <citation type="journal article" date="2022" name="Nat. Commun.">
        <title>Visualizing molecular interactions that determine assembly of a bullet-shaped vesicular stomatitis virus particle.</title>
        <authorList>
            <person name="Jenni S."/>
            <person name="Horwitz J.A."/>
            <person name="Bloyet L.M."/>
            <person name="Whelan S.P.J."/>
            <person name="Harrison S.C."/>
        </authorList>
    </citation>
    <scope>STRUCTURE BY ELECTRON MICROSCOPY (3.50 ANGSTROMS)</scope>
    <scope>INTERACTION WITH THE MATRIX PROTEIN</scope>
    <scope>SUBUNIT</scope>
    <scope>FUNCTION</scope>
    <scope>RNA-BINDING</scope>
    <scope>INTERACTION WITH THE PHOSPHOPROTEIN</scope>
    <scope>SUBCELLULAR LOCATION</scope>
</reference>
<reference evidence="27" key="14">
    <citation type="journal article" date="2022" name="Nat. Commun.">
        <title>Atomic model of vesicular stomatitis virus and mechanism of assembly.</title>
        <authorList>
            <person name="Zhou K."/>
            <person name="Si Z."/>
            <person name="Ge P."/>
            <person name="Tsao J."/>
            <person name="Luo M."/>
            <person name="Zhou Z.H."/>
        </authorList>
    </citation>
    <scope>STRUCTURE BY ELECTRON MICROSCOPY (3.47 ANGSTROMS)</scope>
    <scope>INTERACTION WITH THE MATRIX PROTEIN</scope>
    <scope>SUBUNIT</scope>
    <scope>FUNCTION</scope>
    <scope>RNA-BINDING</scope>
    <scope>SUBCELLULAR LOCATION</scope>
</reference>
<reference key="15">
    <citation type="journal article" date="2022" name="Proc. Natl. Acad. Sci. U.S.A.">
        <title>Locations and in situ structure of the polymerase complex inside the virion of vesicular stomatitis virus.</title>
        <authorList>
            <person name="Si Z."/>
            <person name="Zhou K."/>
            <person name="Tsao J."/>
            <person name="Luo M."/>
            <person name="Zhou Z.H."/>
        </authorList>
    </citation>
    <scope>STRUCTURE BY ELECTRON MICROSCOPY (15.0 ANGSTROMS) OF THE VIRION</scope>
    <scope>SUBCELLULAR LOCATION</scope>
    <scope>FUNCTION</scope>
    <scope>INTERACTION WITH THE MATRIX PROTEIN</scope>
    <scope>INTERACTION WITH THE L POLYMERASE</scope>
    <scope>INTERACTION WITH THE PHOSPHOPROTEIN</scope>
</reference>